<accession>Q95337</accession>
<dbReference type="EMBL" id="U65922">
    <property type="protein sequence ID" value="AAC48703.1"/>
    <property type="molecule type" value="Genomic_DNA"/>
</dbReference>
<dbReference type="SMR" id="Q95337"/>
<dbReference type="GO" id="GO:0001533">
    <property type="term" value="C:cornified envelope"/>
    <property type="evidence" value="ECO:0007669"/>
    <property type="project" value="InterPro"/>
</dbReference>
<dbReference type="GO" id="GO:0005737">
    <property type="term" value="C:cytoplasm"/>
    <property type="evidence" value="ECO:0007669"/>
    <property type="project" value="UniProtKB-SubCell"/>
</dbReference>
<dbReference type="GO" id="GO:0031424">
    <property type="term" value="P:keratinization"/>
    <property type="evidence" value="ECO:0007669"/>
    <property type="project" value="UniProtKB-KW"/>
</dbReference>
<dbReference type="InterPro" id="IPR009733">
    <property type="entry name" value="Involucrin2"/>
</dbReference>
<dbReference type="InterPro" id="IPR019743">
    <property type="entry name" value="Involucrin_CS"/>
</dbReference>
<dbReference type="InterPro" id="IPR019571">
    <property type="entry name" value="Involucrin_N"/>
</dbReference>
<dbReference type="Pfam" id="PF06994">
    <property type="entry name" value="Involucrin2"/>
    <property type="match status" value="6"/>
</dbReference>
<dbReference type="Pfam" id="PF10583">
    <property type="entry name" value="Involucrin_N"/>
    <property type="match status" value="1"/>
</dbReference>
<dbReference type="PROSITE" id="PS00795">
    <property type="entry name" value="INVOLUCRIN"/>
    <property type="match status" value="1"/>
</dbReference>
<name>INVO_TUPGL</name>
<comment type="function">
    <text evidence="1">Part of the insoluble cornified cell envelope (CE) of stratified squamous epithelia.</text>
</comment>
<comment type="subunit">
    <text evidence="1">Directly or indirectly cross-linked to cornifelin (CNFN).</text>
</comment>
<comment type="subcellular location">
    <subcellularLocation>
        <location>Cytoplasm</location>
    </subcellularLocation>
    <text evidence="1">Constituent of the scaffolding of the cornified envelope.</text>
</comment>
<comment type="tissue specificity">
    <text>Keratinocytes of epidermis and other stratified squamous epithelia.</text>
</comment>
<comment type="PTM">
    <text evidence="1">Substrate of transglutaminase. Specific glutamines or lysines are cross-linked to keratins, desmoplakin and to inter involucrin molecules (By similarity).</text>
</comment>
<comment type="similarity">
    <text evidence="3">Belongs to the involucrin family.</text>
</comment>
<feature type="chain" id="PRO_0000260314" description="Involucrin">
    <location>
        <begin position="1"/>
        <end position="400"/>
    </location>
</feature>
<feature type="region of interest" description="Disordered" evidence="2">
    <location>
        <begin position="1"/>
        <end position="196"/>
    </location>
</feature>
<feature type="region of interest" description="Disordered" evidence="2">
    <location>
        <begin position="273"/>
        <end position="312"/>
    </location>
</feature>
<feature type="region of interest" description="Disordered" evidence="2">
    <location>
        <begin position="333"/>
        <end position="381"/>
    </location>
</feature>
<feature type="compositionally biased region" description="Low complexity" evidence="2">
    <location>
        <begin position="78"/>
        <end position="159"/>
    </location>
</feature>
<feature type="compositionally biased region" description="Low complexity" evidence="2">
    <location>
        <begin position="169"/>
        <end position="186"/>
    </location>
</feature>
<feature type="compositionally biased region" description="Low complexity" evidence="2">
    <location>
        <begin position="279"/>
        <end position="292"/>
    </location>
</feature>
<feature type="compositionally biased region" description="Basic and acidic residues" evidence="2">
    <location>
        <begin position="333"/>
        <end position="344"/>
    </location>
</feature>
<feature type="compositionally biased region" description="Low complexity" evidence="2">
    <location>
        <begin position="346"/>
        <end position="358"/>
    </location>
</feature>
<proteinExistence type="evidence at transcript level"/>
<gene>
    <name type="primary">IVL</name>
</gene>
<keyword id="KW-0963">Cytoplasm</keyword>
<keyword id="KW-0417">Keratinization</keyword>
<keyword id="KW-0677">Repeat</keyword>
<organism>
    <name type="scientific">Tupaia glis</name>
    <name type="common">Common tree shrew</name>
    <name type="synonym">Sorex glis</name>
    <dbReference type="NCBI Taxonomy" id="9395"/>
    <lineage>
        <taxon>Eukaryota</taxon>
        <taxon>Metazoa</taxon>
        <taxon>Chordata</taxon>
        <taxon>Craniata</taxon>
        <taxon>Vertebrata</taxon>
        <taxon>Euteleostomi</taxon>
        <taxon>Mammalia</taxon>
        <taxon>Eutheria</taxon>
        <taxon>Euarchontoglires</taxon>
        <taxon>Scandentia</taxon>
        <taxon>Tupaiidae</taxon>
        <taxon>Tupaia</taxon>
    </lineage>
</organism>
<sequence>MSQQHTLPVTLPAALSQEPLKTVSPPPNTQQEHTKQPTPLPAPCQEVPSELPVEDPSKHKEKHTTPVKGVPEQEHELQQQQDSQEQELHLGQQQQQQEYQEQELHLGQQQQQQEYQEQELHLGQQQQQEYQEQELHLGQHQQQTSQEQKLHLGQQQQHQESQEQKLHLEQQQQEPQKQELHLGQQEAQEEELHLKQQQQECQKEEVHLEQQQQECQKEEVHLEQQQQECQKEEVHLEQQQQECQKEEVHLEQQQQECQKEEVHLEQQQQECQKEEVHLEQQQQETQELQQHQGAGILEQKLHQEKAQSEQQLKGQLDWEEKLLDQQLEQELAKRDEQLGKKEEQLLEPSEQQEGLLEQPTLVPAPSQLHENQAAQVPKGEVLLPIEQQRQQEVQWPVKHK</sequence>
<reference key="1">
    <citation type="journal article" date="1997" name="Gene">
        <title>The involucrin gene of the tree shrew: recent repeat additions and the relocation of cysteine codons.</title>
        <authorList>
            <person name="Phillips M."/>
            <person name="Rice R.H."/>
            <person name="Djian P."/>
            <person name="Green H."/>
        </authorList>
    </citation>
    <scope>NUCLEOTIDE SEQUENCE [GENOMIC DNA]</scope>
</reference>
<evidence type="ECO:0000250" key="1"/>
<evidence type="ECO:0000256" key="2">
    <source>
        <dbReference type="SAM" id="MobiDB-lite"/>
    </source>
</evidence>
<evidence type="ECO:0000305" key="3"/>
<protein>
    <recommendedName>
        <fullName>Involucrin</fullName>
    </recommendedName>
</protein>